<sequence>MSAKSAISKEIFAPLDERMLGAVQVKRRTKKKIPFLATGGQGEYLTYICLSVTNKKPTQASITKVKQFEGSTSFVRRSQWMLEQLRQVKGIDPNRDSAEFDLLFENAFDQWVASTASEKCTFFQILHHTCQRYLTDRKPEFINCQSKIMGGNSILHSAADSVTSAVQKASQALNERGERLGRAEEKTEDLKNSAQQFAETAHKLAMKHKC</sequence>
<accession>Q2YDL1</accession>
<organism>
    <name type="scientific">Bos taurus</name>
    <name type="common">Bovine</name>
    <dbReference type="NCBI Taxonomy" id="9913"/>
    <lineage>
        <taxon>Eukaryota</taxon>
        <taxon>Metazoa</taxon>
        <taxon>Chordata</taxon>
        <taxon>Craniata</taxon>
        <taxon>Vertebrata</taxon>
        <taxon>Euteleostomi</taxon>
        <taxon>Mammalia</taxon>
        <taxon>Eutheria</taxon>
        <taxon>Laurasiatheria</taxon>
        <taxon>Artiodactyla</taxon>
        <taxon>Ruminantia</taxon>
        <taxon>Pecora</taxon>
        <taxon>Bovidae</taxon>
        <taxon>Bovinae</taxon>
        <taxon>Bos</taxon>
    </lineage>
</organism>
<protein>
    <recommendedName>
        <fullName>Syntaxin-binding protein 6</fullName>
    </recommendedName>
</protein>
<dbReference type="EMBL" id="BC110173">
    <property type="protein sequence ID" value="AAI10174.1"/>
    <property type="molecule type" value="mRNA"/>
</dbReference>
<dbReference type="RefSeq" id="NP_001069506.1">
    <property type="nucleotide sequence ID" value="NM_001076038.2"/>
</dbReference>
<dbReference type="SMR" id="Q2YDL1"/>
<dbReference type="FunCoup" id="Q2YDL1">
    <property type="interactions" value="144"/>
</dbReference>
<dbReference type="STRING" id="9913.ENSBTAP00000068385"/>
<dbReference type="PaxDb" id="9913-ENSBTAP00000028368"/>
<dbReference type="GeneID" id="534718"/>
<dbReference type="KEGG" id="bta:534718"/>
<dbReference type="CTD" id="29091"/>
<dbReference type="eggNOG" id="KOG1983">
    <property type="taxonomic scope" value="Eukaryota"/>
</dbReference>
<dbReference type="InParanoid" id="Q2YDL1"/>
<dbReference type="OrthoDB" id="8931425at2759"/>
<dbReference type="Proteomes" id="UP000009136">
    <property type="component" value="Unplaced"/>
</dbReference>
<dbReference type="GO" id="GO:0005737">
    <property type="term" value="C:cytoplasm"/>
    <property type="evidence" value="ECO:0007669"/>
    <property type="project" value="UniProtKB-SubCell"/>
</dbReference>
<dbReference type="GO" id="GO:0016020">
    <property type="term" value="C:membrane"/>
    <property type="evidence" value="ECO:0007669"/>
    <property type="project" value="UniProtKB-SubCell"/>
</dbReference>
<dbReference type="GO" id="GO:0035542">
    <property type="term" value="P:regulation of SNARE complex assembly"/>
    <property type="evidence" value="ECO:0007669"/>
    <property type="project" value="InterPro"/>
</dbReference>
<dbReference type="CDD" id="cd14681">
    <property type="entry name" value="PH-STXBP6"/>
    <property type="match status" value="1"/>
</dbReference>
<dbReference type="CDD" id="cd15892">
    <property type="entry name" value="R-SNARE_STXBP6"/>
    <property type="match status" value="1"/>
</dbReference>
<dbReference type="FunFam" id="1.20.5.110:FF:000029">
    <property type="entry name" value="Syntaxin-binding protein 6"/>
    <property type="match status" value="1"/>
</dbReference>
<dbReference type="FunFam" id="2.30.29.90:FF:000002">
    <property type="entry name" value="syntaxin-binding protein 6"/>
    <property type="match status" value="1"/>
</dbReference>
<dbReference type="Gene3D" id="1.20.5.110">
    <property type="match status" value="1"/>
</dbReference>
<dbReference type="Gene3D" id="2.30.29.90">
    <property type="match status" value="1"/>
</dbReference>
<dbReference type="InterPro" id="IPR028258">
    <property type="entry name" value="Sec3-PIP2_bind"/>
</dbReference>
<dbReference type="InterPro" id="IPR037821">
    <property type="entry name" value="STXBP6_PH"/>
</dbReference>
<dbReference type="InterPro" id="IPR037822">
    <property type="entry name" value="STXBP6_SNARE"/>
</dbReference>
<dbReference type="InterPro" id="IPR042855">
    <property type="entry name" value="V_SNARE_CC"/>
</dbReference>
<dbReference type="PANTHER" id="PTHR16092:SF14">
    <property type="entry name" value="EXOCYST COMPLEX COMPONENT 1 ISOFORM X1"/>
    <property type="match status" value="1"/>
</dbReference>
<dbReference type="PANTHER" id="PTHR16092">
    <property type="entry name" value="SEC3/SYNTAXIN-RELATED"/>
    <property type="match status" value="1"/>
</dbReference>
<dbReference type="Pfam" id="PF15277">
    <property type="entry name" value="Sec3-PIP2_bind"/>
    <property type="match status" value="1"/>
</dbReference>
<dbReference type="Pfam" id="PF00957">
    <property type="entry name" value="Synaptobrevin"/>
    <property type="match status" value="1"/>
</dbReference>
<dbReference type="SMART" id="SM01313">
    <property type="entry name" value="Sec3-PIP2_bind"/>
    <property type="match status" value="1"/>
</dbReference>
<dbReference type="SUPFAM" id="SSF58038">
    <property type="entry name" value="SNARE fusion complex"/>
    <property type="match status" value="1"/>
</dbReference>
<dbReference type="PROSITE" id="PS50892">
    <property type="entry name" value="V_SNARE"/>
    <property type="match status" value="1"/>
</dbReference>
<feature type="initiator methionine" description="Removed" evidence="2">
    <location>
        <position position="1"/>
    </location>
</feature>
<feature type="chain" id="PRO_0000283574" description="Syntaxin-binding protein 6">
    <location>
        <begin position="2"/>
        <end position="210"/>
    </location>
</feature>
<feature type="domain" description="v-SNARE coiled-coil homology" evidence="3">
    <location>
        <begin position="151"/>
        <end position="210"/>
    </location>
</feature>
<feature type="modified residue" description="N-acetylserine" evidence="2">
    <location>
        <position position="2"/>
    </location>
</feature>
<proteinExistence type="evidence at transcript level"/>
<gene>
    <name type="primary">STXBP6</name>
</gene>
<comment type="function">
    <text>Forms non-fusogenic complexes with SNAP25 and STX1A and may thereby modulate the formation of functional SNARE complexes and exocytosis.</text>
</comment>
<comment type="subunit">
    <text evidence="1">Part of a ternary complex containing SNAP25 and STX1A that can be dissociated by NAPA and NSF. Interacts with STX4A (By similarity).</text>
</comment>
<comment type="subcellular location">
    <subcellularLocation>
        <location evidence="1">Cytoplasm</location>
    </subcellularLocation>
    <subcellularLocation>
        <location evidence="1">Membrane</location>
        <topology evidence="1">Peripheral membrane protein</topology>
    </subcellularLocation>
</comment>
<keyword id="KW-0007">Acetylation</keyword>
<keyword id="KW-0175">Coiled coil</keyword>
<keyword id="KW-0963">Cytoplasm</keyword>
<keyword id="KW-0472">Membrane</keyword>
<keyword id="KW-1185">Reference proteome</keyword>
<name>STXB6_BOVIN</name>
<reference key="1">
    <citation type="submission" date="2005-11" db="EMBL/GenBank/DDBJ databases">
        <authorList>
            <consortium name="NIH - Mammalian Gene Collection (MGC) project"/>
        </authorList>
    </citation>
    <scope>NUCLEOTIDE SEQUENCE [LARGE SCALE MRNA]</scope>
    <source>
        <strain>Crossbred X Angus</strain>
        <tissue>Liver</tissue>
    </source>
</reference>
<evidence type="ECO:0000250" key="1"/>
<evidence type="ECO:0000250" key="2">
    <source>
        <dbReference type="UniProtKB" id="Q8NFX7"/>
    </source>
</evidence>
<evidence type="ECO:0000255" key="3">
    <source>
        <dbReference type="PROSITE-ProRule" id="PRU00290"/>
    </source>
</evidence>